<evidence type="ECO:0000255" key="1">
    <source>
        <dbReference type="HAMAP-Rule" id="MF_00605"/>
    </source>
</evidence>
<sequence length="264" mass="29000">MDEATQSAIQFDVVTLFPEMFRALTDWGITSRAVKQGRFGLRTWNPRDFTTDNYRTVDDRPYGGGPGMVMLAKPLEAAIGAAKAAQAAQGVATSRVVMMSPQGAPLTHERVARMAAEPGVVLLCGRYEAIDQRLIDRCVDEELSLGDFVLSGGELPAMALMDAVVRLLPGVLNDAQSAVQDSFADGLLDCPHYTRPEEYEGVRVPDVLLGGHHAEIERWRRQEALRNTIAKRPDLIARARREKLLSRADEAWLASLAKEAKQAS</sequence>
<accession>A3NXU1</accession>
<keyword id="KW-0963">Cytoplasm</keyword>
<keyword id="KW-0489">Methyltransferase</keyword>
<keyword id="KW-0949">S-adenosyl-L-methionine</keyword>
<keyword id="KW-0808">Transferase</keyword>
<keyword id="KW-0819">tRNA processing</keyword>
<comment type="function">
    <text evidence="1">Specifically methylates guanosine-37 in various tRNAs.</text>
</comment>
<comment type="catalytic activity">
    <reaction evidence="1">
        <text>guanosine(37) in tRNA + S-adenosyl-L-methionine = N(1)-methylguanosine(37) in tRNA + S-adenosyl-L-homocysteine + H(+)</text>
        <dbReference type="Rhea" id="RHEA:36899"/>
        <dbReference type="Rhea" id="RHEA-COMP:10145"/>
        <dbReference type="Rhea" id="RHEA-COMP:10147"/>
        <dbReference type="ChEBI" id="CHEBI:15378"/>
        <dbReference type="ChEBI" id="CHEBI:57856"/>
        <dbReference type="ChEBI" id="CHEBI:59789"/>
        <dbReference type="ChEBI" id="CHEBI:73542"/>
        <dbReference type="ChEBI" id="CHEBI:74269"/>
        <dbReference type="EC" id="2.1.1.228"/>
    </reaction>
</comment>
<comment type="subunit">
    <text evidence="1">Homodimer.</text>
</comment>
<comment type="subcellular location">
    <subcellularLocation>
        <location evidence="1">Cytoplasm</location>
    </subcellularLocation>
</comment>
<comment type="similarity">
    <text evidence="1">Belongs to the RNA methyltransferase TrmD family.</text>
</comment>
<proteinExistence type="inferred from homology"/>
<gene>
    <name evidence="1" type="primary">trmD</name>
    <name type="ordered locus">BURPS1106A_2917</name>
</gene>
<feature type="chain" id="PRO_1000006460" description="tRNA (guanine-N(1)-)-methyltransferase">
    <location>
        <begin position="1"/>
        <end position="264"/>
    </location>
</feature>
<feature type="binding site" evidence="1">
    <location>
        <position position="125"/>
    </location>
    <ligand>
        <name>S-adenosyl-L-methionine</name>
        <dbReference type="ChEBI" id="CHEBI:59789"/>
    </ligand>
</feature>
<feature type="binding site" evidence="1">
    <location>
        <begin position="145"/>
        <end position="150"/>
    </location>
    <ligand>
        <name>S-adenosyl-L-methionine</name>
        <dbReference type="ChEBI" id="CHEBI:59789"/>
    </ligand>
</feature>
<protein>
    <recommendedName>
        <fullName evidence="1">tRNA (guanine-N(1)-)-methyltransferase</fullName>
        <ecNumber evidence="1">2.1.1.228</ecNumber>
    </recommendedName>
    <alternativeName>
        <fullName evidence="1">M1G-methyltransferase</fullName>
    </alternativeName>
    <alternativeName>
        <fullName evidence="1">tRNA [GM37] methyltransferase</fullName>
    </alternativeName>
</protein>
<organism>
    <name type="scientific">Burkholderia pseudomallei (strain 1106a)</name>
    <dbReference type="NCBI Taxonomy" id="357348"/>
    <lineage>
        <taxon>Bacteria</taxon>
        <taxon>Pseudomonadati</taxon>
        <taxon>Pseudomonadota</taxon>
        <taxon>Betaproteobacteria</taxon>
        <taxon>Burkholderiales</taxon>
        <taxon>Burkholderiaceae</taxon>
        <taxon>Burkholderia</taxon>
        <taxon>pseudomallei group</taxon>
    </lineage>
</organism>
<reference key="1">
    <citation type="journal article" date="2010" name="Genome Biol. Evol.">
        <title>Continuing evolution of Burkholderia mallei through genome reduction and large-scale rearrangements.</title>
        <authorList>
            <person name="Losada L."/>
            <person name="Ronning C.M."/>
            <person name="DeShazer D."/>
            <person name="Woods D."/>
            <person name="Fedorova N."/>
            <person name="Kim H.S."/>
            <person name="Shabalina S.A."/>
            <person name="Pearson T.R."/>
            <person name="Brinkac L."/>
            <person name="Tan P."/>
            <person name="Nandi T."/>
            <person name="Crabtree J."/>
            <person name="Badger J."/>
            <person name="Beckstrom-Sternberg S."/>
            <person name="Saqib M."/>
            <person name="Schutzer S.E."/>
            <person name="Keim P."/>
            <person name="Nierman W.C."/>
        </authorList>
    </citation>
    <scope>NUCLEOTIDE SEQUENCE [LARGE SCALE GENOMIC DNA]</scope>
    <source>
        <strain>1106a</strain>
    </source>
</reference>
<name>TRMD_BURP0</name>
<dbReference type="EC" id="2.1.1.228" evidence="1"/>
<dbReference type="EMBL" id="CP000572">
    <property type="protein sequence ID" value="ABN91095.1"/>
    <property type="molecule type" value="Genomic_DNA"/>
</dbReference>
<dbReference type="RefSeq" id="WP_004189914.1">
    <property type="nucleotide sequence ID" value="NC_009076.1"/>
</dbReference>
<dbReference type="SMR" id="A3NXU1"/>
<dbReference type="GeneID" id="93061077"/>
<dbReference type="KEGG" id="bpl:BURPS1106A_2917"/>
<dbReference type="HOGENOM" id="CLU_047363_0_2_4"/>
<dbReference type="Proteomes" id="UP000006738">
    <property type="component" value="Chromosome I"/>
</dbReference>
<dbReference type="GO" id="GO:0005829">
    <property type="term" value="C:cytosol"/>
    <property type="evidence" value="ECO:0007669"/>
    <property type="project" value="TreeGrafter"/>
</dbReference>
<dbReference type="GO" id="GO:0052906">
    <property type="term" value="F:tRNA (guanine(37)-N1)-methyltransferase activity"/>
    <property type="evidence" value="ECO:0007669"/>
    <property type="project" value="UniProtKB-UniRule"/>
</dbReference>
<dbReference type="GO" id="GO:0002939">
    <property type="term" value="P:tRNA N1-guanine methylation"/>
    <property type="evidence" value="ECO:0007669"/>
    <property type="project" value="TreeGrafter"/>
</dbReference>
<dbReference type="CDD" id="cd18080">
    <property type="entry name" value="TrmD-like"/>
    <property type="match status" value="1"/>
</dbReference>
<dbReference type="FunFam" id="1.10.1270.20:FF:000001">
    <property type="entry name" value="tRNA (guanine-N(1)-)-methyltransferase"/>
    <property type="match status" value="1"/>
</dbReference>
<dbReference type="FunFam" id="3.40.1280.10:FF:000001">
    <property type="entry name" value="tRNA (guanine-N(1)-)-methyltransferase"/>
    <property type="match status" value="1"/>
</dbReference>
<dbReference type="Gene3D" id="3.40.1280.10">
    <property type="match status" value="1"/>
</dbReference>
<dbReference type="Gene3D" id="1.10.1270.20">
    <property type="entry name" value="tRNA(m1g37)methyltransferase, domain 2"/>
    <property type="match status" value="1"/>
</dbReference>
<dbReference type="HAMAP" id="MF_00605">
    <property type="entry name" value="TrmD"/>
    <property type="match status" value="1"/>
</dbReference>
<dbReference type="InterPro" id="IPR029028">
    <property type="entry name" value="Alpha/beta_knot_MTases"/>
</dbReference>
<dbReference type="InterPro" id="IPR023148">
    <property type="entry name" value="tRNA_m1G_MeTrfase_C_sf"/>
</dbReference>
<dbReference type="InterPro" id="IPR002649">
    <property type="entry name" value="tRNA_m1G_MeTrfase_TrmD"/>
</dbReference>
<dbReference type="InterPro" id="IPR029026">
    <property type="entry name" value="tRNA_m1G_MTases_N"/>
</dbReference>
<dbReference type="InterPro" id="IPR016009">
    <property type="entry name" value="tRNA_MeTrfase_TRMD/TRM10"/>
</dbReference>
<dbReference type="NCBIfam" id="NF000648">
    <property type="entry name" value="PRK00026.1"/>
    <property type="match status" value="1"/>
</dbReference>
<dbReference type="NCBIfam" id="TIGR00088">
    <property type="entry name" value="trmD"/>
    <property type="match status" value="1"/>
</dbReference>
<dbReference type="PANTHER" id="PTHR46417">
    <property type="entry name" value="TRNA (GUANINE-N(1)-)-METHYLTRANSFERASE"/>
    <property type="match status" value="1"/>
</dbReference>
<dbReference type="PANTHER" id="PTHR46417:SF1">
    <property type="entry name" value="TRNA (GUANINE-N(1)-)-METHYLTRANSFERASE"/>
    <property type="match status" value="1"/>
</dbReference>
<dbReference type="Pfam" id="PF01746">
    <property type="entry name" value="tRNA_m1G_MT"/>
    <property type="match status" value="1"/>
</dbReference>
<dbReference type="PIRSF" id="PIRSF000386">
    <property type="entry name" value="tRNA_mtase"/>
    <property type="match status" value="1"/>
</dbReference>
<dbReference type="SUPFAM" id="SSF75217">
    <property type="entry name" value="alpha/beta knot"/>
    <property type="match status" value="1"/>
</dbReference>